<proteinExistence type="predicted"/>
<reference key="1">
    <citation type="journal article" date="1996" name="Science">
        <title>Complete genome sequence of the methanogenic archaeon, Methanococcus jannaschii.</title>
        <authorList>
            <person name="Bult C.J."/>
            <person name="White O."/>
            <person name="Olsen G.J."/>
            <person name="Zhou L."/>
            <person name="Fleischmann R.D."/>
            <person name="Sutton G.G."/>
            <person name="Blake J.A."/>
            <person name="FitzGerald L.M."/>
            <person name="Clayton R.A."/>
            <person name="Gocayne J.D."/>
            <person name="Kerlavage A.R."/>
            <person name="Dougherty B.A."/>
            <person name="Tomb J.-F."/>
            <person name="Adams M.D."/>
            <person name="Reich C.I."/>
            <person name="Overbeek R."/>
            <person name="Kirkness E.F."/>
            <person name="Weinstock K.G."/>
            <person name="Merrick J.M."/>
            <person name="Glodek A."/>
            <person name="Scott J.L."/>
            <person name="Geoghagen N.S.M."/>
            <person name="Weidman J.F."/>
            <person name="Fuhrmann J.L."/>
            <person name="Nguyen D."/>
            <person name="Utterback T.R."/>
            <person name="Kelley J.M."/>
            <person name="Peterson J.D."/>
            <person name="Sadow P.W."/>
            <person name="Hanna M.C."/>
            <person name="Cotton M.D."/>
            <person name="Roberts K.M."/>
            <person name="Hurst M.A."/>
            <person name="Kaine B.P."/>
            <person name="Borodovsky M."/>
            <person name="Klenk H.-P."/>
            <person name="Fraser C.M."/>
            <person name="Smith H.O."/>
            <person name="Woese C.R."/>
            <person name="Venter J.C."/>
        </authorList>
    </citation>
    <scope>NUCLEOTIDE SEQUENCE [LARGE SCALE GENOMIC DNA]</scope>
    <source>
        <strain>ATCC 43067 / DSM 2661 / JAL-1 / JCM 10045 / NBRC 100440</strain>
    </source>
</reference>
<protein>
    <recommendedName>
        <fullName>Pyruvate synthase subunit PorC</fullName>
        <ecNumber>1.2.7.1</ecNumber>
    </recommendedName>
    <alternativeName>
        <fullName>Pyruvate oxidoreductase gamma chain</fullName>
        <shortName>POR</shortName>
    </alternativeName>
    <alternativeName>
        <fullName>Pyruvic-ferredoxin oxidoreductase subunit gamma</fullName>
    </alternativeName>
</protein>
<keyword id="KW-0560">Oxidoreductase</keyword>
<keyword id="KW-1185">Reference proteome</keyword>
<organism>
    <name type="scientific">Methanocaldococcus jannaschii (strain ATCC 43067 / DSM 2661 / JAL-1 / JCM 10045 / NBRC 100440)</name>
    <name type="common">Methanococcus jannaschii</name>
    <dbReference type="NCBI Taxonomy" id="243232"/>
    <lineage>
        <taxon>Archaea</taxon>
        <taxon>Methanobacteriati</taxon>
        <taxon>Methanobacteriota</taxon>
        <taxon>Methanomada group</taxon>
        <taxon>Methanococci</taxon>
        <taxon>Methanococcales</taxon>
        <taxon>Methanocaldococcaceae</taxon>
        <taxon>Methanocaldococcus</taxon>
    </lineage>
</organism>
<dbReference type="EC" id="1.2.7.1"/>
<dbReference type="EMBL" id="L77117">
    <property type="protein sequence ID" value="AAB98256.1"/>
    <property type="molecule type" value="Genomic_DNA"/>
</dbReference>
<dbReference type="PIR" id="F64333">
    <property type="entry name" value="F64333"/>
</dbReference>
<dbReference type="RefSeq" id="WP_010869766.1">
    <property type="nucleotide sequence ID" value="NC_000909.1"/>
</dbReference>
<dbReference type="SMR" id="Q57717"/>
<dbReference type="FunCoup" id="Q57717">
    <property type="interactions" value="94"/>
</dbReference>
<dbReference type="STRING" id="243232.MJ_0269"/>
<dbReference type="PaxDb" id="243232-MJ_0269"/>
<dbReference type="EnsemblBacteria" id="AAB98256">
    <property type="protein sequence ID" value="AAB98256"/>
    <property type="gene ID" value="MJ_0269"/>
</dbReference>
<dbReference type="GeneID" id="1451123"/>
<dbReference type="KEGG" id="mja:MJ_0269"/>
<dbReference type="eggNOG" id="arCOG01603">
    <property type="taxonomic scope" value="Archaea"/>
</dbReference>
<dbReference type="HOGENOM" id="CLU_087284_2_0_2"/>
<dbReference type="InParanoid" id="Q57717"/>
<dbReference type="OrthoDB" id="372091at2157"/>
<dbReference type="PhylomeDB" id="Q57717"/>
<dbReference type="Proteomes" id="UP000000805">
    <property type="component" value="Chromosome"/>
</dbReference>
<dbReference type="GO" id="GO:0019164">
    <property type="term" value="F:pyruvate synthase activity"/>
    <property type="evidence" value="ECO:0007669"/>
    <property type="project" value="UniProtKB-EC"/>
</dbReference>
<dbReference type="Gene3D" id="3.40.920.10">
    <property type="entry name" value="Pyruvate-ferredoxin oxidoreductase, PFOR, domain III"/>
    <property type="match status" value="1"/>
</dbReference>
<dbReference type="InterPro" id="IPR051626">
    <property type="entry name" value="Oxidoreductase_gamma_subunit"/>
</dbReference>
<dbReference type="InterPro" id="IPR011894">
    <property type="entry name" value="PorC_KorC"/>
</dbReference>
<dbReference type="InterPro" id="IPR053412">
    <property type="entry name" value="Pyruvate_synthase_PorC"/>
</dbReference>
<dbReference type="InterPro" id="IPR019752">
    <property type="entry name" value="Pyrv/ketoisovalerate_OxRed_cat"/>
</dbReference>
<dbReference type="InterPro" id="IPR002869">
    <property type="entry name" value="Pyrv_flavodox_OxRed_cen"/>
</dbReference>
<dbReference type="NCBIfam" id="TIGR02175">
    <property type="entry name" value="PorC_KorC"/>
    <property type="match status" value="1"/>
</dbReference>
<dbReference type="NCBIfam" id="NF040683">
    <property type="entry name" value="PorC_Meth_Thtga"/>
    <property type="match status" value="1"/>
</dbReference>
<dbReference type="NCBIfam" id="NF006321">
    <property type="entry name" value="PRK08534.1"/>
    <property type="match status" value="1"/>
</dbReference>
<dbReference type="PANTHER" id="PTHR43366">
    <property type="entry name" value="PYRUVATE SYNTHASE SUBUNIT PORC"/>
    <property type="match status" value="1"/>
</dbReference>
<dbReference type="PANTHER" id="PTHR43366:SF1">
    <property type="entry name" value="PYRUVATE SYNTHASE SUBUNIT PORC"/>
    <property type="match status" value="1"/>
</dbReference>
<dbReference type="Pfam" id="PF01558">
    <property type="entry name" value="POR"/>
    <property type="match status" value="1"/>
</dbReference>
<dbReference type="SUPFAM" id="SSF53323">
    <property type="entry name" value="Pyruvate-ferredoxin oxidoreductase, PFOR, domain III"/>
    <property type="match status" value="1"/>
</dbReference>
<feature type="chain" id="PRO_0000099910" description="Pyruvate synthase subunit PorC">
    <location>
        <begin position="1"/>
        <end position="178"/>
    </location>
</feature>
<gene>
    <name type="primary">porC</name>
    <name type="ordered locus">MJ0269</name>
</gene>
<accession>Q57717</accession>
<name>PORC_METJA</name>
<sequence>MIEIRFHGRGGQGAVTAAQILAKAAFYDGKFCQAFPFFGVERRGAPVMAFTRIDDKKITLRCQIYEPDYVIVQDATLLESVNVVEGLKKDGAVVINTVKDDLDLGYKTYTIDATGIALDVLGVPIVNTAMVGAFAGVTGIVSIESVKKAILDTFKGKLGEKNAKAAEVAYNEMLKKYG</sequence>
<comment type="catalytic activity">
    <reaction>
        <text>2 oxidized [2Fe-2S]-[ferredoxin] + pyruvate + CoA = 2 reduced [2Fe-2S]-[ferredoxin] + acetyl-CoA + CO2 + H(+)</text>
        <dbReference type="Rhea" id="RHEA:12765"/>
        <dbReference type="Rhea" id="RHEA-COMP:10000"/>
        <dbReference type="Rhea" id="RHEA-COMP:10001"/>
        <dbReference type="ChEBI" id="CHEBI:15361"/>
        <dbReference type="ChEBI" id="CHEBI:15378"/>
        <dbReference type="ChEBI" id="CHEBI:16526"/>
        <dbReference type="ChEBI" id="CHEBI:33737"/>
        <dbReference type="ChEBI" id="CHEBI:33738"/>
        <dbReference type="ChEBI" id="CHEBI:57287"/>
        <dbReference type="ChEBI" id="CHEBI:57288"/>
        <dbReference type="EC" id="1.2.7.1"/>
    </reaction>
</comment>
<comment type="subunit">
    <text>Heterotetramer of one alpha, one beta, one delta and one gamma chain.</text>
</comment>